<name>CMAA_PSESG</name>
<accession>Q6TNA5</accession>
<proteinExistence type="evidence at protein level"/>
<comment type="function">
    <text evidence="2">Involved in the biosynthesis of the phytotoxin coronatine (COR) which mimics the plant hormone jasmonic acid isoleucine and promotes opening of stomata for bacterial entry, bacterial growth in the apoplast, systemic susceptibility, and disease symptoms. CmaA catalyzes the adenylation of L-allo-isoleucine (via the A domain) and the attachment of L-allo-isoleucine to the 4'-phosphopantetheine arm located within the T domain of CmaA. It can also use L-isoleucine, L-leucine and L-valine as substrates.</text>
</comment>
<comment type="catalytic activity">
    <reaction evidence="2">
        <text>L-alloisoleucine + holo-[CmaA peptidyl-carrier protein] + ATP = L-alloisoleucyl-[CmaA peptidyl-carrier protein] + AMP + diphosphate</text>
        <dbReference type="Rhea" id="RHEA:45624"/>
        <dbReference type="Rhea" id="RHEA-COMP:11295"/>
        <dbReference type="Rhea" id="RHEA-COMP:11297"/>
        <dbReference type="ChEBI" id="CHEBI:30616"/>
        <dbReference type="ChEBI" id="CHEBI:33019"/>
        <dbReference type="ChEBI" id="CHEBI:64479"/>
        <dbReference type="ChEBI" id="CHEBI:85338"/>
        <dbReference type="ChEBI" id="CHEBI:85339"/>
        <dbReference type="ChEBI" id="CHEBI:456215"/>
        <dbReference type="EC" id="6.2.1.46"/>
    </reaction>
</comment>
<comment type="cofactor">
    <cofactor evidence="5">
        <name>pantetheine 4'-phosphate</name>
        <dbReference type="ChEBI" id="CHEBI:47942"/>
    </cofactor>
    <text evidence="5">Binds 1 phosphopantetheine covalently.</text>
</comment>
<comment type="biophysicochemical properties">
    <kinetics>
        <KM evidence="2">0.26 mM for L-allo-isoleucine (at pH 7.5 and 25 degrees Celsius)</KM>
        <KM evidence="2">0.84 mM for D-allo-isoleucine (at pH 7.5 and 25 degrees Celsius)</KM>
        <KM evidence="2">1 mM for L-isoleucine (at pH 7.5 and 25 degrees Celsius)</KM>
        <KM evidence="2">1.1 mM for D-isoleucine (at pH 7.5 and 25 degrees Celsius)</KM>
        <KM evidence="2">1.5 mM for DL-coronamic acid (at pH 7.5 and 25 degrees Celsius)</KM>
        <KM evidence="2">7.4 mM for L-leucine (at pH 7.5 and 25 degrees Celsius)</KM>
        <KM evidence="2">8.2 mM for L-valine (at pH 7.5 and 25 degrees Celsius)</KM>
        <KM evidence="2">11 mM for DL-norcoronamic acid (at pH 7.5 and 25 degrees Celsius)</KM>
        <text evidence="2">kcat is 17 min(-1) for ligase activity with L-allo-isoleucine as substrate (at pH 7.5 and 25 degrees Celsius). kcat is 16 min(-1) for ligase activity with L-leucine as substrate (at pH 7.5 and 25 degrees Celsius). kcat is 12 min(-1) for ligase activity with L-valine as substrate (at pH 7.5 and 25 degrees Celsius). kcat is 6.7 min(-1) for ligase activity with DL-coronamic acid as substrate (at pH 7.5 and 25 degrees Celsius). kcat is 2.8 min(-1) for ligase activity with L-isoleucine as substrate (at pH 7.5 and 25 degrees Celsius). kcat is 1.1 min(-1) for ligase activity with D-isoleucine and DL-norcoronamic acid as substrates (at pH 7.5 and 25 degrees Celsius). kcat is 0.2 min(-1) for ligase activity with D-allo-isoleucine as substrate (at pH 7.5 and 25 degrees Celsius).</text>
    </kinetics>
</comment>
<comment type="subunit">
    <text evidence="2">Homodimer.</text>
</comment>
<comment type="domain">
    <text evidence="4">The didomain protein contains an adenylation domain (A domain) and a thiolation domain (T domain).</text>
</comment>
<comment type="similarity">
    <text evidence="4">Belongs to the ATP-dependent AMP-binding enzyme family.</text>
</comment>
<organism>
    <name type="scientific">Pseudomonas savastanoi pv. glycinea</name>
    <name type="common">Pseudomonas syringae pv. glycinea</name>
    <dbReference type="NCBI Taxonomy" id="318"/>
    <lineage>
        <taxon>Bacteria</taxon>
        <taxon>Pseudomonadati</taxon>
        <taxon>Pseudomonadota</taxon>
        <taxon>Gammaproteobacteria</taxon>
        <taxon>Pseudomonadales</taxon>
        <taxon>Pseudomonadaceae</taxon>
        <taxon>Pseudomonas</taxon>
    </lineage>
</organism>
<evidence type="ECO:0000255" key="1">
    <source>
        <dbReference type="PROSITE-ProRule" id="PRU00258"/>
    </source>
</evidence>
<evidence type="ECO:0000269" key="2">
    <source>
    </source>
</evidence>
<evidence type="ECO:0000303" key="3">
    <source>
    </source>
</evidence>
<evidence type="ECO:0000305" key="4"/>
<evidence type="ECO:0000305" key="5">
    <source>
    </source>
</evidence>
<reference key="1">
    <citation type="journal article" date="2004" name="J. Bacteriol.">
        <title>Characterization of CmaA, an adenylation-thiolation didomain enzyme involved in the biosynthesis of coronatine.</title>
        <authorList>
            <person name="Couch R."/>
            <person name="O'Connor S.E."/>
            <person name="Seidle H."/>
            <person name="Walsh C.T."/>
            <person name="Parry R."/>
        </authorList>
    </citation>
    <scope>NUCLEOTIDE SEQUENCE [GENOMIC DNA]</scope>
    <scope>FUNCTION</scope>
    <scope>CATALYTIC ACTIVITY</scope>
    <scope>BIOPHYSICOCHEMICAL PROPERTIES</scope>
    <scope>SUBSTRATE SPECIFICITY</scope>
    <scope>COFACTOR</scope>
    <scope>SUBUNIT</scope>
    <source>
        <strain>PG4180</strain>
        <plasmid>p4180A</plasmid>
    </source>
</reference>
<reference key="2">
    <citation type="submission" date="2015-09" db="EMBL/GenBank/DDBJ databases">
        <title>Genome announcement of multiple Pseudomonas syringae strains.</title>
        <authorList>
            <person name="Thakur S."/>
            <person name="Wang P.W."/>
            <person name="Gong Y."/>
            <person name="Weir B.S."/>
            <person name="Guttman D.S."/>
        </authorList>
    </citation>
    <scope>NUCLEOTIDE SEQUENCE [LARGE SCALE GENOMIC DNA]</scope>
    <source>
        <strain>ICMP2189</strain>
    </source>
</reference>
<gene>
    <name evidence="3" type="primary">CmaA</name>
    <name type="ORF">ALO37_100711</name>
</gene>
<feature type="chain" id="PRO_0000435661" description="L-allo-isoleucine:holo-[CmaA peptidyl-carrier protein] ligase">
    <location>
        <begin position="1"/>
        <end position="595"/>
    </location>
</feature>
<feature type="domain" description="Carrier" evidence="1">
    <location>
        <begin position="507"/>
        <end position="582"/>
    </location>
</feature>
<feature type="modified residue" description="O-(pantetheine 4'-phosphoryl)serine" evidence="1">
    <location>
        <position position="542"/>
    </location>
</feature>
<dbReference type="EC" id="6.2.1.46" evidence="2"/>
<dbReference type="EMBL" id="AY391839">
    <property type="protein sequence ID" value="AAQ93484.1"/>
    <property type="molecule type" value="Genomic_DNA"/>
</dbReference>
<dbReference type="EMBL" id="LJQL01000191">
    <property type="protein sequence ID" value="KPX44542.1"/>
    <property type="molecule type" value="Genomic_DNA"/>
</dbReference>
<dbReference type="RefSeq" id="WP_004666822.1">
    <property type="nucleotide sequence ID" value="NZ_RBVH01000262.1"/>
</dbReference>
<dbReference type="SMR" id="Q6TNA5"/>
<dbReference type="KEGG" id="ag:AAQ93484"/>
<dbReference type="PATRIC" id="fig|318.3.peg.2001"/>
<dbReference type="GO" id="GO:0005737">
    <property type="term" value="C:cytoplasm"/>
    <property type="evidence" value="ECO:0007669"/>
    <property type="project" value="TreeGrafter"/>
</dbReference>
<dbReference type="GO" id="GO:0016878">
    <property type="term" value="F:acid-thiol ligase activity"/>
    <property type="evidence" value="ECO:0000314"/>
    <property type="project" value="UniProtKB"/>
</dbReference>
<dbReference type="GO" id="GO:0031177">
    <property type="term" value="F:phosphopantetheine binding"/>
    <property type="evidence" value="ECO:0007669"/>
    <property type="project" value="TreeGrafter"/>
</dbReference>
<dbReference type="GO" id="GO:0043041">
    <property type="term" value="P:amino acid activation for nonribosomal peptide biosynthetic process"/>
    <property type="evidence" value="ECO:0007669"/>
    <property type="project" value="TreeGrafter"/>
</dbReference>
<dbReference type="GO" id="GO:0010188">
    <property type="term" value="P:response to microbial phytotoxin"/>
    <property type="evidence" value="ECO:0000314"/>
    <property type="project" value="UniProtKB"/>
</dbReference>
<dbReference type="GO" id="GO:0044550">
    <property type="term" value="P:secondary metabolite biosynthetic process"/>
    <property type="evidence" value="ECO:0007669"/>
    <property type="project" value="TreeGrafter"/>
</dbReference>
<dbReference type="CDD" id="cd05930">
    <property type="entry name" value="A_NRPS"/>
    <property type="match status" value="1"/>
</dbReference>
<dbReference type="Gene3D" id="3.30.300.30">
    <property type="match status" value="1"/>
</dbReference>
<dbReference type="Gene3D" id="1.10.1200.10">
    <property type="entry name" value="ACP-like"/>
    <property type="match status" value="1"/>
</dbReference>
<dbReference type="Gene3D" id="3.40.50.12780">
    <property type="entry name" value="N-terminal domain of ligase-like"/>
    <property type="match status" value="1"/>
</dbReference>
<dbReference type="InterPro" id="IPR036736">
    <property type="entry name" value="ACP-like_sf"/>
</dbReference>
<dbReference type="InterPro" id="IPR025110">
    <property type="entry name" value="AMP-bd_C"/>
</dbReference>
<dbReference type="InterPro" id="IPR045851">
    <property type="entry name" value="AMP-bd_C_sf"/>
</dbReference>
<dbReference type="InterPro" id="IPR020845">
    <property type="entry name" value="AMP-binding_CS"/>
</dbReference>
<dbReference type="InterPro" id="IPR000873">
    <property type="entry name" value="AMP-dep_synth/lig_dom"/>
</dbReference>
<dbReference type="InterPro" id="IPR042099">
    <property type="entry name" value="ANL_N_sf"/>
</dbReference>
<dbReference type="InterPro" id="IPR009081">
    <property type="entry name" value="PP-bd_ACP"/>
</dbReference>
<dbReference type="PANTHER" id="PTHR45527:SF1">
    <property type="entry name" value="FATTY ACID SYNTHASE"/>
    <property type="match status" value="1"/>
</dbReference>
<dbReference type="PANTHER" id="PTHR45527">
    <property type="entry name" value="NONRIBOSOMAL PEPTIDE SYNTHETASE"/>
    <property type="match status" value="1"/>
</dbReference>
<dbReference type="Pfam" id="PF00501">
    <property type="entry name" value="AMP-binding"/>
    <property type="match status" value="1"/>
</dbReference>
<dbReference type="Pfam" id="PF13193">
    <property type="entry name" value="AMP-binding_C"/>
    <property type="match status" value="1"/>
</dbReference>
<dbReference type="Pfam" id="PF00550">
    <property type="entry name" value="PP-binding"/>
    <property type="match status" value="1"/>
</dbReference>
<dbReference type="SUPFAM" id="SSF56801">
    <property type="entry name" value="Acetyl-CoA synthetase-like"/>
    <property type="match status" value="1"/>
</dbReference>
<dbReference type="SUPFAM" id="SSF47336">
    <property type="entry name" value="ACP-like"/>
    <property type="match status" value="1"/>
</dbReference>
<dbReference type="PROSITE" id="PS00455">
    <property type="entry name" value="AMP_BINDING"/>
    <property type="match status" value="1"/>
</dbReference>
<dbReference type="PROSITE" id="PS50075">
    <property type="entry name" value="CARRIER"/>
    <property type="match status" value="1"/>
</dbReference>
<keyword id="KW-0436">Ligase</keyword>
<keyword id="KW-0596">Phosphopantetheine</keyword>
<keyword id="KW-0597">Phosphoprotein</keyword>
<keyword id="KW-0614">Plasmid</keyword>
<keyword id="KW-0843">Virulence</keyword>
<geneLocation type="plasmid">
    <name>p4180A</name>
</geneLocation>
<protein>
    <recommendedName>
        <fullName evidence="4">L-allo-isoleucine:holo-[CmaA peptidyl-carrier protein] ligase</fullName>
        <ecNumber evidence="2">6.2.1.46</ecNumber>
    </recommendedName>
    <alternativeName>
        <fullName evidence="3">Adenylation activation enzyme</fullName>
    </alternativeName>
    <alternativeName>
        <fullName evidence="3">Coronamic acid synthetase CmaA</fullName>
    </alternativeName>
</protein>
<sequence length="595" mass="65930">MTSYHSHPPKAYRRFESVCTQAPNAIAVVHEGKPVTYQQLQTQVLERSEALIRQGLADHPYMPLMANRCLEYLITMLACCKLGITYVSIEPSTPSKRLIAVLEQLGCNHLLLLGQPTDLRPDPTLTCFRLDDCGTLCSDGPALRQPIRRRLDDASVITVMFTSGTTGVPKGVRISQDGLLNLVDNVQQQVQGKPRSYVHHSSIGFDAALFEVWVPLLTGACVTLQPSEFNIDALDHCVRAASCDVLLLTTSLFHLVAQHRLSMLEAVRVLYVGGEVLKPVHARALLLANPRITLVNGYGPTENTVFSTWYSLNKPEDAERDVIPIGQFLHQVHGKIVDAKLQEVEVGTPGELLLTGANLALGYLDEALTPTRFLQLPEGTYYRTGDYVIQDEHGMLFYQGRIDEQVKIKGFRVEIAEVEHALTQLPGVAQAVVQAHVMNDLENSLHAFIVFRHGSPTIEESKLMSLLGDRLPHYMVPRRIHYLAELPLTANGKVDKRSLQPPEKAAVVSPQAGSAVLEIWSGILGTRNLQLEHSIYGYGASSLSVVMAHSRINEILGRTTPFDEVARLSTFQEWVQYYATHADPVTSLRSQHGNH</sequence>